<dbReference type="PIR" id="A01553">
    <property type="entry name" value="RHPG"/>
</dbReference>
<dbReference type="BMRB" id="P01287"/>
<dbReference type="SMR" id="P01287"/>
<dbReference type="STRING" id="9823.ENSSSCP00000007809"/>
<dbReference type="PaxDb" id="9823-ENSSSCP00000007809"/>
<dbReference type="eggNOG" id="ENOG502S2N6">
    <property type="taxonomic scope" value="Eukaryota"/>
</dbReference>
<dbReference type="HOGENOM" id="CLU_174932_0_0_1"/>
<dbReference type="InParanoid" id="P01287"/>
<dbReference type="Proteomes" id="UP000008227">
    <property type="component" value="Unplaced"/>
</dbReference>
<dbReference type="Proteomes" id="UP000314985">
    <property type="component" value="Unplaced"/>
</dbReference>
<dbReference type="Proteomes" id="UP000694570">
    <property type="component" value="Unplaced"/>
</dbReference>
<dbReference type="Proteomes" id="UP000694571">
    <property type="component" value="Unplaced"/>
</dbReference>
<dbReference type="Proteomes" id="UP000694720">
    <property type="component" value="Unplaced"/>
</dbReference>
<dbReference type="Proteomes" id="UP000694722">
    <property type="component" value="Unplaced"/>
</dbReference>
<dbReference type="Proteomes" id="UP000694723">
    <property type="component" value="Unplaced"/>
</dbReference>
<dbReference type="Proteomes" id="UP000694724">
    <property type="component" value="Unplaced"/>
</dbReference>
<dbReference type="Proteomes" id="UP000694725">
    <property type="component" value="Unplaced"/>
</dbReference>
<dbReference type="Proteomes" id="UP000694726">
    <property type="component" value="Unplaced"/>
</dbReference>
<dbReference type="Proteomes" id="UP000694727">
    <property type="component" value="Unplaced"/>
</dbReference>
<dbReference type="Proteomes" id="UP000694728">
    <property type="component" value="Unplaced"/>
</dbReference>
<dbReference type="GO" id="GO:0005576">
    <property type="term" value="C:extracellular region"/>
    <property type="evidence" value="ECO:0007669"/>
    <property type="project" value="UniProtKB-SubCell"/>
</dbReference>
<dbReference type="GO" id="GO:0005184">
    <property type="term" value="F:neuropeptide hormone activity"/>
    <property type="evidence" value="ECO:0007669"/>
    <property type="project" value="InterPro"/>
</dbReference>
<dbReference type="GO" id="GO:0032880">
    <property type="term" value="P:regulation of protein localization"/>
    <property type="evidence" value="ECO:0007669"/>
    <property type="project" value="UniProtKB-ARBA"/>
</dbReference>
<dbReference type="InterPro" id="IPR000532">
    <property type="entry name" value="Glucagon_GIP_secretin_VIP"/>
</dbReference>
<dbReference type="InterPro" id="IPR046963">
    <property type="entry name" value="VIP/GHRH-like"/>
</dbReference>
<dbReference type="PANTHER" id="PTHR11213">
    <property type="entry name" value="GLUCAGON-FAMILY NEUROPEPTIDE"/>
    <property type="match status" value="1"/>
</dbReference>
<dbReference type="PANTHER" id="PTHR11213:SF6">
    <property type="entry name" value="SOMATOLIBERIN"/>
    <property type="match status" value="1"/>
</dbReference>
<dbReference type="Pfam" id="PF00123">
    <property type="entry name" value="Hormone_2"/>
    <property type="match status" value="1"/>
</dbReference>
<dbReference type="SMART" id="SM00070">
    <property type="entry name" value="GLUCA"/>
    <property type="match status" value="1"/>
</dbReference>
<dbReference type="PROSITE" id="PS00260">
    <property type="entry name" value="GLUCAGON"/>
    <property type="match status" value="1"/>
</dbReference>
<feature type="chain" id="PRO_0000148921" description="Somatoliberin">
    <location>
        <begin position="1"/>
        <end position="44"/>
    </location>
</feature>
<feature type="modified residue" description="Leucine amide" evidence="1">
    <location>
        <position position="44"/>
    </location>
</feature>
<reference key="1">
    <citation type="journal article" date="1983" name="Biochem. Biophys. Res. Commun.">
        <title>Isolation and characterization of the porcine hypothalamic growth hormone releasing factor.</title>
        <authorList>
            <person name="Boehlen P."/>
            <person name="Esch F."/>
            <person name="Brazeau P."/>
            <person name="Ling N."/>
            <person name="Guillemin R."/>
        </authorList>
    </citation>
    <scope>PROTEIN SEQUENCE</scope>
    <scope>AMIDATION AT LEU-44</scope>
    <source>
        <tissue>Hypothalamus</tissue>
    </source>
</reference>
<accession>P01287</accession>
<evidence type="ECO:0000269" key="1">
    <source>
    </source>
</evidence>
<evidence type="ECO:0000305" key="2"/>
<organism>
    <name type="scientific">Sus scrofa</name>
    <name type="common">Pig</name>
    <dbReference type="NCBI Taxonomy" id="9823"/>
    <lineage>
        <taxon>Eukaryota</taxon>
        <taxon>Metazoa</taxon>
        <taxon>Chordata</taxon>
        <taxon>Craniata</taxon>
        <taxon>Vertebrata</taxon>
        <taxon>Euteleostomi</taxon>
        <taxon>Mammalia</taxon>
        <taxon>Eutheria</taxon>
        <taxon>Laurasiatheria</taxon>
        <taxon>Artiodactyla</taxon>
        <taxon>Suina</taxon>
        <taxon>Suidae</taxon>
        <taxon>Sus</taxon>
    </lineage>
</organism>
<protein>
    <recommendedName>
        <fullName>Somatoliberin</fullName>
    </recommendedName>
    <alternativeName>
        <fullName>Growth hormone-releasing factor</fullName>
        <shortName>GRF</shortName>
    </alternativeName>
    <alternativeName>
        <fullName>Growth hormone-releasing hormone</fullName>
        <shortName>GHRH</shortName>
    </alternativeName>
</protein>
<name>SLIB_PIG</name>
<gene>
    <name type="primary">GHRH</name>
</gene>
<comment type="function">
    <text>GRF is released by the hypothalamus and acts on the adenohypophyse to stimulate the secretion of growth hormone.</text>
</comment>
<comment type="subcellular location">
    <subcellularLocation>
        <location>Secreted</location>
    </subcellularLocation>
</comment>
<comment type="miscellaneous">
    <text>The carboxyl-amidated somatoliberin is twice as active as that having a free carboxyl end.</text>
</comment>
<comment type="similarity">
    <text evidence="2">Belongs to the glucagon family.</text>
</comment>
<keyword id="KW-0027">Amidation</keyword>
<keyword id="KW-0903">Direct protein sequencing</keyword>
<keyword id="KW-1185">Reference proteome</keyword>
<keyword id="KW-0964">Secreted</keyword>
<sequence length="44" mass="5110">YADAIFTNSYRKVLGQLSARKLLQDIMSRQQGERNQEQGARVRL</sequence>
<proteinExistence type="evidence at protein level"/>